<gene>
    <name evidence="1" type="primary">kdpA</name>
    <name type="ordered locus">plu1420</name>
</gene>
<dbReference type="EMBL" id="BX571863">
    <property type="protein sequence ID" value="CAE13713.1"/>
    <property type="molecule type" value="Genomic_DNA"/>
</dbReference>
<dbReference type="RefSeq" id="WP_011145726.1">
    <property type="nucleotide sequence ID" value="NC_005126.1"/>
</dbReference>
<dbReference type="SMR" id="Q7N6W5"/>
<dbReference type="STRING" id="243265.plu1420"/>
<dbReference type="GeneID" id="48847707"/>
<dbReference type="KEGG" id="plu:plu1420"/>
<dbReference type="eggNOG" id="COG2060">
    <property type="taxonomic scope" value="Bacteria"/>
</dbReference>
<dbReference type="HOGENOM" id="CLU_018614_3_0_6"/>
<dbReference type="OrthoDB" id="9763796at2"/>
<dbReference type="Proteomes" id="UP000002514">
    <property type="component" value="Chromosome"/>
</dbReference>
<dbReference type="GO" id="GO:0005886">
    <property type="term" value="C:plasma membrane"/>
    <property type="evidence" value="ECO:0007669"/>
    <property type="project" value="UniProtKB-SubCell"/>
</dbReference>
<dbReference type="GO" id="GO:0008556">
    <property type="term" value="F:P-type potassium transmembrane transporter activity"/>
    <property type="evidence" value="ECO:0007669"/>
    <property type="project" value="InterPro"/>
</dbReference>
<dbReference type="GO" id="GO:0030955">
    <property type="term" value="F:potassium ion binding"/>
    <property type="evidence" value="ECO:0007669"/>
    <property type="project" value="UniProtKB-UniRule"/>
</dbReference>
<dbReference type="HAMAP" id="MF_00275">
    <property type="entry name" value="KdpA"/>
    <property type="match status" value="1"/>
</dbReference>
<dbReference type="InterPro" id="IPR004623">
    <property type="entry name" value="KdpA"/>
</dbReference>
<dbReference type="NCBIfam" id="TIGR00680">
    <property type="entry name" value="kdpA"/>
    <property type="match status" value="1"/>
</dbReference>
<dbReference type="PANTHER" id="PTHR30607">
    <property type="entry name" value="POTASSIUM-TRANSPORTING ATPASE A CHAIN"/>
    <property type="match status" value="1"/>
</dbReference>
<dbReference type="PANTHER" id="PTHR30607:SF2">
    <property type="entry name" value="POTASSIUM-TRANSPORTING ATPASE POTASSIUM-BINDING SUBUNIT"/>
    <property type="match status" value="1"/>
</dbReference>
<dbReference type="Pfam" id="PF03814">
    <property type="entry name" value="KdpA"/>
    <property type="match status" value="1"/>
</dbReference>
<dbReference type="PIRSF" id="PIRSF001294">
    <property type="entry name" value="K_ATPaseA"/>
    <property type="match status" value="1"/>
</dbReference>
<evidence type="ECO:0000255" key="1">
    <source>
        <dbReference type="HAMAP-Rule" id="MF_00275"/>
    </source>
</evidence>
<proteinExistence type="inferred from homology"/>
<organism>
    <name type="scientific">Photorhabdus laumondii subsp. laumondii (strain DSM 15139 / CIP 105565 / TT01)</name>
    <name type="common">Photorhabdus luminescens subsp. laumondii</name>
    <dbReference type="NCBI Taxonomy" id="243265"/>
    <lineage>
        <taxon>Bacteria</taxon>
        <taxon>Pseudomonadati</taxon>
        <taxon>Pseudomonadota</taxon>
        <taxon>Gammaproteobacteria</taxon>
        <taxon>Enterobacterales</taxon>
        <taxon>Morganellaceae</taxon>
        <taxon>Photorhabdus</taxon>
    </lineage>
</organism>
<reference key="1">
    <citation type="journal article" date="2003" name="Nat. Biotechnol.">
        <title>The genome sequence of the entomopathogenic bacterium Photorhabdus luminescens.</title>
        <authorList>
            <person name="Duchaud E."/>
            <person name="Rusniok C."/>
            <person name="Frangeul L."/>
            <person name="Buchrieser C."/>
            <person name="Givaudan A."/>
            <person name="Taourit S."/>
            <person name="Bocs S."/>
            <person name="Boursaux-Eude C."/>
            <person name="Chandler M."/>
            <person name="Charles J.-F."/>
            <person name="Dassa E."/>
            <person name="Derose R."/>
            <person name="Derzelle S."/>
            <person name="Freyssinet G."/>
            <person name="Gaudriault S."/>
            <person name="Medigue C."/>
            <person name="Lanois A."/>
            <person name="Powell K."/>
            <person name="Siguier P."/>
            <person name="Vincent R."/>
            <person name="Wingate V."/>
            <person name="Zouine M."/>
            <person name="Glaser P."/>
            <person name="Boemare N."/>
            <person name="Danchin A."/>
            <person name="Kunst F."/>
        </authorList>
    </citation>
    <scope>NUCLEOTIDE SEQUENCE [LARGE SCALE GENOMIC DNA]</scope>
    <source>
        <strain>DSM 15139 / CIP 105565 / TT01</strain>
    </source>
</reference>
<name>KDPA_PHOLL</name>
<sequence length="568" mass="60975">MAASAFLLITSFLLILMLLAKPLGNIIANLIDGDIPRWLTKIESGLWRCCGLQKPGGTVKEMNWWQYALAITIFNLTGLLLLFTLLVTQHALPLNPEHFPGLKWDLALNTAISFITNTDWQAYSGENTLSYFSQMTGLTVQNFLSAATGIAVAFALIRTFSRHGVNTAGNAWVDITRITLYLLLPLSMVIALVFVSQGVIQNFEPYQLAHTIEGQPQLIPMGPVASQEAIKLLGTNGGGFFGANSSHPFENPTAISNFIQILSIFLIPCALCFAFGQVVGDNRQGHTLLWAMSIIFVIATVGVMYAELKGNLHFSLLGANSNINMEGKENRFGILATSIYAVVTTAASCGAVNAMHDSFTALGGMIPMWLIQIGEVVFGGVGSGLYGMLLFVLLTVFIAGLMIGRAPEYLGKKIEVFEMKMVALAILVTPTLALLGTALTISTASGRAGILNPGAHGFSEVLYALSSTANNNGSAFAGLNTNNMFYNLLLAIILFLGRFGMILPVLAIAGSLAVKKRQPASNGTLPTYGPLFISLLILTIMLIGALTFIPALILGPVIEHLQIWLMAR</sequence>
<protein>
    <recommendedName>
        <fullName evidence="1">Potassium-transporting ATPase potassium-binding subunit</fullName>
    </recommendedName>
    <alternativeName>
        <fullName evidence="1">ATP phosphohydrolase [potassium-transporting] A chain</fullName>
    </alternativeName>
    <alternativeName>
        <fullName evidence="1">Potassium-binding and translocating subunit A</fullName>
    </alternativeName>
    <alternativeName>
        <fullName evidence="1">Potassium-translocating ATPase A chain</fullName>
    </alternativeName>
</protein>
<feature type="chain" id="PRO_0000166511" description="Potassium-transporting ATPase potassium-binding subunit">
    <location>
        <begin position="1"/>
        <end position="568"/>
    </location>
</feature>
<feature type="transmembrane region" description="Helical" evidence="1">
    <location>
        <begin position="7"/>
        <end position="27"/>
    </location>
</feature>
<feature type="transmembrane region" description="Helical" evidence="1">
    <location>
        <begin position="67"/>
        <end position="87"/>
    </location>
</feature>
<feature type="transmembrane region" description="Helical" evidence="1">
    <location>
        <begin position="137"/>
        <end position="157"/>
    </location>
</feature>
<feature type="transmembrane region" description="Helical" evidence="1">
    <location>
        <begin position="180"/>
        <end position="200"/>
    </location>
</feature>
<feature type="transmembrane region" description="Helical" evidence="1">
    <location>
        <begin position="258"/>
        <end position="278"/>
    </location>
</feature>
<feature type="transmembrane region" description="Helical" evidence="1">
    <location>
        <begin position="288"/>
        <end position="308"/>
    </location>
</feature>
<feature type="transmembrane region" description="Helical" evidence="1">
    <location>
        <begin position="332"/>
        <end position="352"/>
    </location>
</feature>
<feature type="transmembrane region" description="Helical" evidence="1">
    <location>
        <begin position="361"/>
        <end position="381"/>
    </location>
</feature>
<feature type="transmembrane region" description="Helical" evidence="1">
    <location>
        <begin position="384"/>
        <end position="404"/>
    </location>
</feature>
<feature type="transmembrane region" description="Helical" evidence="1">
    <location>
        <begin position="421"/>
        <end position="441"/>
    </location>
</feature>
<feature type="transmembrane region" description="Helical" evidence="1">
    <location>
        <begin position="488"/>
        <end position="508"/>
    </location>
</feature>
<feature type="transmembrane region" description="Helical" evidence="1">
    <location>
        <begin position="535"/>
        <end position="555"/>
    </location>
</feature>
<keyword id="KW-0997">Cell inner membrane</keyword>
<keyword id="KW-1003">Cell membrane</keyword>
<keyword id="KW-0406">Ion transport</keyword>
<keyword id="KW-0472">Membrane</keyword>
<keyword id="KW-0630">Potassium</keyword>
<keyword id="KW-0633">Potassium transport</keyword>
<keyword id="KW-1185">Reference proteome</keyword>
<keyword id="KW-0812">Transmembrane</keyword>
<keyword id="KW-1133">Transmembrane helix</keyword>
<keyword id="KW-0813">Transport</keyword>
<comment type="function">
    <text evidence="1">Part of the high-affinity ATP-driven potassium transport (or Kdp) system, which catalyzes the hydrolysis of ATP coupled with the electrogenic transport of potassium into the cytoplasm. This subunit binds the periplasmic potassium ions and delivers the ions to the membrane domain of KdpB through an intramembrane tunnel.</text>
</comment>
<comment type="subunit">
    <text evidence="1">The system is composed of three essential subunits: KdpA, KdpB and KdpC.</text>
</comment>
<comment type="subcellular location">
    <subcellularLocation>
        <location evidence="1">Cell inner membrane</location>
        <topology evidence="1">Multi-pass membrane protein</topology>
    </subcellularLocation>
</comment>
<comment type="similarity">
    <text evidence="1">Belongs to the KdpA family.</text>
</comment>
<accession>Q7N6W5</accession>